<reference key="1">
    <citation type="submission" date="2008-04" db="EMBL/GenBank/DDBJ databases">
        <title>Complete sequence of chromosome of Exiguobacterium sibiricum 255-15.</title>
        <authorList>
            <consortium name="US DOE Joint Genome Institute"/>
            <person name="Copeland A."/>
            <person name="Lucas S."/>
            <person name="Lapidus A."/>
            <person name="Glavina del Rio T."/>
            <person name="Dalin E."/>
            <person name="Tice H."/>
            <person name="Bruce D."/>
            <person name="Goodwin L."/>
            <person name="Pitluck S."/>
            <person name="Kiss H."/>
            <person name="Chertkov O."/>
            <person name="Monk C."/>
            <person name="Brettin T."/>
            <person name="Detter J.C."/>
            <person name="Han C."/>
            <person name="Kuske C.R."/>
            <person name="Schmutz J."/>
            <person name="Larimer F."/>
            <person name="Land M."/>
            <person name="Hauser L."/>
            <person name="Kyrpides N."/>
            <person name="Mikhailova N."/>
            <person name="Vishnivetskaya T."/>
            <person name="Rodrigues D.F."/>
            <person name="Gilichinsky D."/>
            <person name="Tiedje J."/>
            <person name="Richardson P."/>
        </authorList>
    </citation>
    <scope>NUCLEOTIDE SEQUENCE [LARGE SCALE GENOMIC DNA]</scope>
    <source>
        <strain>DSM 17290 / CCUG 55495 / CIP 109462 / JCM 13490 / 255-15</strain>
    </source>
</reference>
<evidence type="ECO:0000255" key="1">
    <source>
        <dbReference type="HAMAP-Rule" id="MF_00321"/>
    </source>
</evidence>
<protein>
    <recommendedName>
        <fullName evidence="1">Probable GTP-binding protein EngB</fullName>
    </recommendedName>
</protein>
<sequence length="193" mass="21961">MKIYKADFITSGVNPEHYPEPLLPEVALAGRSNVGKSSFINKLVQRKALARTSSKPGKTQTLNFFNINDEVMFVDVPGYGYAKVSKTEREAWGKMMEKYFTTREILKGVVLLVDIRHEPSADDVIMYDFLKYYDLSVIVVATKLDKIKRGQRDKQIAAIKRKLQFDGQDTFIPFSSETGEGVDAAWEAIYRHL</sequence>
<name>ENGB_EXIS2</name>
<accession>B1YJV8</accession>
<organism>
    <name type="scientific">Exiguobacterium sibiricum (strain DSM 17290 / CCUG 55495 / CIP 109462 / JCM 13490 / 255-15)</name>
    <dbReference type="NCBI Taxonomy" id="262543"/>
    <lineage>
        <taxon>Bacteria</taxon>
        <taxon>Bacillati</taxon>
        <taxon>Bacillota</taxon>
        <taxon>Bacilli</taxon>
        <taxon>Bacillales</taxon>
        <taxon>Bacillales Family XII. Incertae Sedis</taxon>
        <taxon>Exiguobacterium</taxon>
    </lineage>
</organism>
<gene>
    <name evidence="1" type="primary">engB</name>
    <name type="ordered locus">Exig_2144</name>
</gene>
<keyword id="KW-0131">Cell cycle</keyword>
<keyword id="KW-0132">Cell division</keyword>
<keyword id="KW-0342">GTP-binding</keyword>
<keyword id="KW-0460">Magnesium</keyword>
<keyword id="KW-0479">Metal-binding</keyword>
<keyword id="KW-0547">Nucleotide-binding</keyword>
<keyword id="KW-1185">Reference proteome</keyword>
<keyword id="KW-0717">Septation</keyword>
<dbReference type="EMBL" id="CP001022">
    <property type="protein sequence ID" value="ACB61596.1"/>
    <property type="molecule type" value="Genomic_DNA"/>
</dbReference>
<dbReference type="SMR" id="B1YJV8"/>
<dbReference type="STRING" id="262543.Exig_2144"/>
<dbReference type="KEGG" id="esi:Exig_2144"/>
<dbReference type="eggNOG" id="COG0218">
    <property type="taxonomic scope" value="Bacteria"/>
</dbReference>
<dbReference type="HOGENOM" id="CLU_033732_3_0_9"/>
<dbReference type="OrthoDB" id="9804921at2"/>
<dbReference type="Proteomes" id="UP000001681">
    <property type="component" value="Chromosome"/>
</dbReference>
<dbReference type="GO" id="GO:0005829">
    <property type="term" value="C:cytosol"/>
    <property type="evidence" value="ECO:0007669"/>
    <property type="project" value="TreeGrafter"/>
</dbReference>
<dbReference type="GO" id="GO:0005525">
    <property type="term" value="F:GTP binding"/>
    <property type="evidence" value="ECO:0007669"/>
    <property type="project" value="UniProtKB-UniRule"/>
</dbReference>
<dbReference type="GO" id="GO:0046872">
    <property type="term" value="F:metal ion binding"/>
    <property type="evidence" value="ECO:0007669"/>
    <property type="project" value="UniProtKB-KW"/>
</dbReference>
<dbReference type="GO" id="GO:0000917">
    <property type="term" value="P:division septum assembly"/>
    <property type="evidence" value="ECO:0007669"/>
    <property type="project" value="UniProtKB-KW"/>
</dbReference>
<dbReference type="CDD" id="cd01876">
    <property type="entry name" value="YihA_EngB"/>
    <property type="match status" value="1"/>
</dbReference>
<dbReference type="FunFam" id="3.40.50.300:FF:000098">
    <property type="entry name" value="Probable GTP-binding protein EngB"/>
    <property type="match status" value="1"/>
</dbReference>
<dbReference type="Gene3D" id="3.40.50.300">
    <property type="entry name" value="P-loop containing nucleotide triphosphate hydrolases"/>
    <property type="match status" value="1"/>
</dbReference>
<dbReference type="HAMAP" id="MF_00321">
    <property type="entry name" value="GTPase_EngB"/>
    <property type="match status" value="1"/>
</dbReference>
<dbReference type="InterPro" id="IPR030393">
    <property type="entry name" value="G_ENGB_dom"/>
</dbReference>
<dbReference type="InterPro" id="IPR006073">
    <property type="entry name" value="GTP-bd"/>
</dbReference>
<dbReference type="InterPro" id="IPR019987">
    <property type="entry name" value="GTP-bd_ribosome_bio_YsxC"/>
</dbReference>
<dbReference type="InterPro" id="IPR027417">
    <property type="entry name" value="P-loop_NTPase"/>
</dbReference>
<dbReference type="InterPro" id="IPR005225">
    <property type="entry name" value="Small_GTP-bd"/>
</dbReference>
<dbReference type="NCBIfam" id="TIGR03598">
    <property type="entry name" value="GTPase_YsxC"/>
    <property type="match status" value="1"/>
</dbReference>
<dbReference type="NCBIfam" id="TIGR00231">
    <property type="entry name" value="small_GTP"/>
    <property type="match status" value="1"/>
</dbReference>
<dbReference type="PANTHER" id="PTHR11649:SF13">
    <property type="entry name" value="ENGB-TYPE G DOMAIN-CONTAINING PROTEIN"/>
    <property type="match status" value="1"/>
</dbReference>
<dbReference type="PANTHER" id="PTHR11649">
    <property type="entry name" value="MSS1/TRME-RELATED GTP-BINDING PROTEIN"/>
    <property type="match status" value="1"/>
</dbReference>
<dbReference type="Pfam" id="PF01926">
    <property type="entry name" value="MMR_HSR1"/>
    <property type="match status" value="1"/>
</dbReference>
<dbReference type="PRINTS" id="PR00449">
    <property type="entry name" value="RASTRNSFRMNG"/>
</dbReference>
<dbReference type="SUPFAM" id="SSF52540">
    <property type="entry name" value="P-loop containing nucleoside triphosphate hydrolases"/>
    <property type="match status" value="1"/>
</dbReference>
<dbReference type="PROSITE" id="PS51706">
    <property type="entry name" value="G_ENGB"/>
    <property type="match status" value="1"/>
</dbReference>
<comment type="function">
    <text evidence="1">Necessary for normal cell division and for the maintenance of normal septation.</text>
</comment>
<comment type="cofactor">
    <cofactor evidence="1">
        <name>Mg(2+)</name>
        <dbReference type="ChEBI" id="CHEBI:18420"/>
    </cofactor>
</comment>
<comment type="similarity">
    <text evidence="1">Belongs to the TRAFAC class TrmE-Era-EngA-EngB-Septin-like GTPase superfamily. EngB GTPase family.</text>
</comment>
<proteinExistence type="inferred from homology"/>
<feature type="chain" id="PRO_1000115971" description="Probable GTP-binding protein EngB">
    <location>
        <begin position="1"/>
        <end position="193"/>
    </location>
</feature>
<feature type="domain" description="EngB-type G" evidence="1">
    <location>
        <begin position="22"/>
        <end position="193"/>
    </location>
</feature>
<feature type="binding site" evidence="1">
    <location>
        <begin position="30"/>
        <end position="37"/>
    </location>
    <ligand>
        <name>GTP</name>
        <dbReference type="ChEBI" id="CHEBI:37565"/>
    </ligand>
</feature>
<feature type="binding site" evidence="1">
    <location>
        <position position="37"/>
    </location>
    <ligand>
        <name>Mg(2+)</name>
        <dbReference type="ChEBI" id="CHEBI:18420"/>
    </ligand>
</feature>
<feature type="binding site" evidence="1">
    <location>
        <begin position="57"/>
        <end position="61"/>
    </location>
    <ligand>
        <name>GTP</name>
        <dbReference type="ChEBI" id="CHEBI:37565"/>
    </ligand>
</feature>
<feature type="binding site" evidence="1">
    <location>
        <position position="59"/>
    </location>
    <ligand>
        <name>Mg(2+)</name>
        <dbReference type="ChEBI" id="CHEBI:18420"/>
    </ligand>
</feature>
<feature type="binding site" evidence="1">
    <location>
        <begin position="75"/>
        <end position="78"/>
    </location>
    <ligand>
        <name>GTP</name>
        <dbReference type="ChEBI" id="CHEBI:37565"/>
    </ligand>
</feature>
<feature type="binding site" evidence="1">
    <location>
        <begin position="142"/>
        <end position="145"/>
    </location>
    <ligand>
        <name>GTP</name>
        <dbReference type="ChEBI" id="CHEBI:37565"/>
    </ligand>
</feature>
<feature type="binding site" evidence="1">
    <location>
        <begin position="174"/>
        <end position="176"/>
    </location>
    <ligand>
        <name>GTP</name>
        <dbReference type="ChEBI" id="CHEBI:37565"/>
    </ligand>
</feature>